<dbReference type="EMBL" id="Z99263">
    <property type="protein sequence ID" value="CAB16419.1"/>
    <property type="molecule type" value="Genomic_DNA"/>
</dbReference>
<dbReference type="EMBL" id="AL583923">
    <property type="protein sequence ID" value="CAC30664.1"/>
    <property type="molecule type" value="Genomic_DNA"/>
</dbReference>
<dbReference type="PIR" id="T45397">
    <property type="entry name" value="T45397"/>
</dbReference>
<dbReference type="RefSeq" id="NP_302178.1">
    <property type="nucleotide sequence ID" value="NC_002677.1"/>
</dbReference>
<dbReference type="RefSeq" id="WP_010908499.1">
    <property type="nucleotide sequence ID" value="NC_002677.1"/>
</dbReference>
<dbReference type="SMR" id="O33096"/>
<dbReference type="STRING" id="272631.gene:17575556"/>
<dbReference type="KEGG" id="mle:ML1711"/>
<dbReference type="PATRIC" id="fig|272631.5.peg.3224"/>
<dbReference type="Leproma" id="ML1711"/>
<dbReference type="eggNOG" id="COG2025">
    <property type="taxonomic scope" value="Bacteria"/>
</dbReference>
<dbReference type="HOGENOM" id="CLU_034178_0_1_11"/>
<dbReference type="OrthoDB" id="9770286at2"/>
<dbReference type="Proteomes" id="UP000000806">
    <property type="component" value="Chromosome"/>
</dbReference>
<dbReference type="GO" id="GO:0009055">
    <property type="term" value="F:electron transfer activity"/>
    <property type="evidence" value="ECO:0007669"/>
    <property type="project" value="InterPro"/>
</dbReference>
<dbReference type="GO" id="GO:0050660">
    <property type="term" value="F:flavin adenine dinucleotide binding"/>
    <property type="evidence" value="ECO:0007669"/>
    <property type="project" value="InterPro"/>
</dbReference>
<dbReference type="GO" id="GO:0033539">
    <property type="term" value="P:fatty acid beta-oxidation using acyl-CoA dehydrogenase"/>
    <property type="evidence" value="ECO:0007669"/>
    <property type="project" value="TreeGrafter"/>
</dbReference>
<dbReference type="CDD" id="cd01715">
    <property type="entry name" value="ETF_alpha"/>
    <property type="match status" value="1"/>
</dbReference>
<dbReference type="FunFam" id="3.40.50.1220:FF:000001">
    <property type="entry name" value="Electron transfer flavoprotein, alpha subunit"/>
    <property type="match status" value="1"/>
</dbReference>
<dbReference type="Gene3D" id="3.40.50.620">
    <property type="entry name" value="HUPs"/>
    <property type="match status" value="1"/>
</dbReference>
<dbReference type="Gene3D" id="3.40.50.1220">
    <property type="entry name" value="TPP-binding domain"/>
    <property type="match status" value="1"/>
</dbReference>
<dbReference type="InterPro" id="IPR029035">
    <property type="entry name" value="DHS-like_NAD/FAD-binding_dom"/>
</dbReference>
<dbReference type="InterPro" id="IPR014730">
    <property type="entry name" value="ETF_a/b_N"/>
</dbReference>
<dbReference type="InterPro" id="IPR001308">
    <property type="entry name" value="ETF_a/FixB"/>
</dbReference>
<dbReference type="InterPro" id="IPR033947">
    <property type="entry name" value="ETF_alpha_N"/>
</dbReference>
<dbReference type="InterPro" id="IPR014731">
    <property type="entry name" value="ETF_asu_C"/>
</dbReference>
<dbReference type="InterPro" id="IPR018206">
    <property type="entry name" value="ETF_asu_C_CS"/>
</dbReference>
<dbReference type="InterPro" id="IPR014729">
    <property type="entry name" value="Rossmann-like_a/b/a_fold"/>
</dbReference>
<dbReference type="PANTHER" id="PTHR43153">
    <property type="entry name" value="ELECTRON TRANSFER FLAVOPROTEIN ALPHA"/>
    <property type="match status" value="1"/>
</dbReference>
<dbReference type="PANTHER" id="PTHR43153:SF1">
    <property type="entry name" value="ELECTRON TRANSFER FLAVOPROTEIN SUBUNIT ALPHA, MITOCHONDRIAL"/>
    <property type="match status" value="1"/>
</dbReference>
<dbReference type="Pfam" id="PF01012">
    <property type="entry name" value="ETF"/>
    <property type="match status" value="1"/>
</dbReference>
<dbReference type="Pfam" id="PF00766">
    <property type="entry name" value="ETF_alpha"/>
    <property type="match status" value="1"/>
</dbReference>
<dbReference type="PIRSF" id="PIRSF000089">
    <property type="entry name" value="Electra_flavoP_a"/>
    <property type="match status" value="1"/>
</dbReference>
<dbReference type="SMART" id="SM00893">
    <property type="entry name" value="ETF"/>
    <property type="match status" value="1"/>
</dbReference>
<dbReference type="SUPFAM" id="SSF52402">
    <property type="entry name" value="Adenine nucleotide alpha hydrolases-like"/>
    <property type="match status" value="1"/>
</dbReference>
<dbReference type="SUPFAM" id="SSF52467">
    <property type="entry name" value="DHS-like NAD/FAD-binding domain"/>
    <property type="match status" value="1"/>
</dbReference>
<dbReference type="PROSITE" id="PS00696">
    <property type="entry name" value="ETF_ALPHA"/>
    <property type="match status" value="1"/>
</dbReference>
<name>ETFA_MYCLE</name>
<sequence>MAEALVLVEHTEGALKKVSAELITAARVLGEPAAVVVGTPGTSAPLVDGLKTAGAAKIYVAESDAADKYLITPVVDVLAALAESSAPAAVLLAATADGKEIGGRLAARIGSGLLVDVVDVREGAVGVHSVFGGVFIVEAQANGDTPVITVRAGAVEAQPAEGAGEQVSVEVPAPAENATKITARAPAVVDNRPDLTEATVVVSGGRGVGSADNFSVVEALADSLGAAVGASRAAVDSGYYPGQFQIGQTGKTVSPQLYIALGISGAIQHRAGMQTSKTIVAVNKDEEAPIFEIADFGVVGDLFKVAPQLTDGIKARKG</sequence>
<comment type="function">
    <text evidence="1">The electron transfer flavoprotein serves as a specific electron acceptor for other dehydrogenases. It transfers the electrons to the main respiratory chain via ETF-ubiquinone oxidoreductase (ETF dehydrogenase) (By similarity).</text>
</comment>
<comment type="cofactor">
    <cofactor evidence="1">
        <name>FAD</name>
        <dbReference type="ChEBI" id="CHEBI:57692"/>
    </cofactor>
    <text evidence="1">Binds 1 FAD per dimer.</text>
</comment>
<comment type="subunit">
    <text>Heterodimer of an alpha and a beta subunit.</text>
</comment>
<comment type="similarity">
    <text evidence="3">Belongs to the ETF alpha-subunit/FixB family.</text>
</comment>
<accession>O33096</accession>
<reference key="1">
    <citation type="journal article" date="2001" name="Nature">
        <title>Massive gene decay in the leprosy bacillus.</title>
        <authorList>
            <person name="Cole S.T."/>
            <person name="Eiglmeier K."/>
            <person name="Parkhill J."/>
            <person name="James K.D."/>
            <person name="Thomson N.R."/>
            <person name="Wheeler P.R."/>
            <person name="Honore N."/>
            <person name="Garnier T."/>
            <person name="Churcher C.M."/>
            <person name="Harris D.E."/>
            <person name="Mungall K.L."/>
            <person name="Basham D."/>
            <person name="Brown D."/>
            <person name="Chillingworth T."/>
            <person name="Connor R."/>
            <person name="Davies R.M."/>
            <person name="Devlin K."/>
            <person name="Duthoy S."/>
            <person name="Feltwell T."/>
            <person name="Fraser A."/>
            <person name="Hamlin N."/>
            <person name="Holroyd S."/>
            <person name="Hornsby T."/>
            <person name="Jagels K."/>
            <person name="Lacroix C."/>
            <person name="Maclean J."/>
            <person name="Moule S."/>
            <person name="Murphy L.D."/>
            <person name="Oliver K."/>
            <person name="Quail M.A."/>
            <person name="Rajandream M.A."/>
            <person name="Rutherford K.M."/>
            <person name="Rutter S."/>
            <person name="Seeger K."/>
            <person name="Simon S."/>
            <person name="Simmonds M."/>
            <person name="Skelton J."/>
            <person name="Squares R."/>
            <person name="Squares S."/>
            <person name="Stevens K."/>
            <person name="Taylor K."/>
            <person name="Whitehead S."/>
            <person name="Woodward J.R."/>
            <person name="Barrell B.G."/>
        </authorList>
    </citation>
    <scope>NUCLEOTIDE SEQUENCE [LARGE SCALE GENOMIC DNA]</scope>
    <source>
        <strain>TN</strain>
    </source>
</reference>
<evidence type="ECO:0000250" key="1"/>
<evidence type="ECO:0000255" key="2"/>
<evidence type="ECO:0000305" key="3"/>
<protein>
    <recommendedName>
        <fullName>Electron transfer flavoprotein subunit alpha</fullName>
        <shortName>Alpha-ETF</shortName>
    </recommendedName>
    <alternativeName>
        <fullName>Electron transfer flavoprotein large subunit</fullName>
        <shortName>ETFLS</shortName>
    </alternativeName>
</protein>
<keyword id="KW-0249">Electron transport</keyword>
<keyword id="KW-0274">FAD</keyword>
<keyword id="KW-0285">Flavoprotein</keyword>
<keyword id="KW-1185">Reference proteome</keyword>
<keyword id="KW-0813">Transport</keyword>
<gene>
    <name type="primary">etfA</name>
    <name type="synonym">fixB</name>
    <name type="ordered locus">ML1711</name>
    <name type="ORF">MLCB637.04</name>
</gene>
<feature type="chain" id="PRO_0000167852" description="Electron transfer flavoprotein subunit alpha">
    <location>
        <begin position="1"/>
        <end position="318"/>
    </location>
</feature>
<feature type="binding site" evidence="2">
    <location>
        <begin position="257"/>
        <end position="285"/>
    </location>
    <ligand>
        <name>FAD</name>
        <dbReference type="ChEBI" id="CHEBI:57692"/>
    </ligand>
</feature>
<proteinExistence type="inferred from homology"/>
<organism>
    <name type="scientific">Mycobacterium leprae (strain TN)</name>
    <dbReference type="NCBI Taxonomy" id="272631"/>
    <lineage>
        <taxon>Bacteria</taxon>
        <taxon>Bacillati</taxon>
        <taxon>Actinomycetota</taxon>
        <taxon>Actinomycetes</taxon>
        <taxon>Mycobacteriales</taxon>
        <taxon>Mycobacteriaceae</taxon>
        <taxon>Mycobacterium</taxon>
    </lineage>
</organism>